<protein>
    <recommendedName>
        <fullName>Potassium-transporting ATPase subunit beta</fullName>
    </recommendedName>
    <alternativeName>
        <fullName>Gastric H(+)/K(+) ATPase subunit beta</fullName>
    </alternativeName>
    <alternativeName>
        <fullName>Proton pump beta chain</fullName>
    </alternativeName>
</protein>
<organism>
    <name type="scientific">Canis lupus familiaris</name>
    <name type="common">Dog</name>
    <name type="synonym">Canis familiaris</name>
    <dbReference type="NCBI Taxonomy" id="9615"/>
    <lineage>
        <taxon>Eukaryota</taxon>
        <taxon>Metazoa</taxon>
        <taxon>Chordata</taxon>
        <taxon>Craniata</taxon>
        <taxon>Vertebrata</taxon>
        <taxon>Euteleostomi</taxon>
        <taxon>Mammalia</taxon>
        <taxon>Eutheria</taxon>
        <taxon>Laurasiatheria</taxon>
        <taxon>Carnivora</taxon>
        <taxon>Caniformia</taxon>
        <taxon>Canidae</taxon>
        <taxon>Canis</taxon>
    </lineage>
</organism>
<dbReference type="EMBL" id="M76486">
    <property type="protein sequence ID" value="AAA16895.1"/>
    <property type="molecule type" value="mRNA"/>
</dbReference>
<dbReference type="PIR" id="JN0904">
    <property type="entry name" value="JN0904"/>
</dbReference>
<dbReference type="RefSeq" id="NP_001003328.1">
    <property type="nucleotide sequence ID" value="NM_001003328.1"/>
</dbReference>
<dbReference type="RefSeq" id="XP_038287465.1">
    <property type="nucleotide sequence ID" value="XM_038431537.1"/>
</dbReference>
<dbReference type="RefSeq" id="XP_038312712.1">
    <property type="nucleotide sequence ID" value="XM_038456784.1"/>
</dbReference>
<dbReference type="RefSeq" id="XP_038426059.1">
    <property type="nucleotide sequence ID" value="XM_038570131.1"/>
</dbReference>
<dbReference type="SMR" id="P33704"/>
<dbReference type="FunCoup" id="P33704">
    <property type="interactions" value="2"/>
</dbReference>
<dbReference type="STRING" id="9615.ENSCAFP00000009569"/>
<dbReference type="GlyCosmos" id="P33704">
    <property type="glycosylation" value="7 sites, No reported glycans"/>
</dbReference>
<dbReference type="PaxDb" id="9612-ENSCAFP00000009569"/>
<dbReference type="Ensembl" id="ENSCAFT00000010321.5">
    <property type="protein sequence ID" value="ENSCAFP00000009569.4"/>
    <property type="gene ID" value="ENSCAFG00000006390.5"/>
</dbReference>
<dbReference type="Ensembl" id="ENSCAFT00030041336.1">
    <property type="protein sequence ID" value="ENSCAFP00030036061.1"/>
    <property type="gene ID" value="ENSCAFG00030022490.1"/>
</dbReference>
<dbReference type="Ensembl" id="ENSCAFT00040020199.1">
    <property type="protein sequence ID" value="ENSCAFP00040017521.1"/>
    <property type="gene ID" value="ENSCAFG00040010941.1"/>
</dbReference>
<dbReference type="Ensembl" id="ENSCAFT00845047780.1">
    <property type="protein sequence ID" value="ENSCAFP00845037489.1"/>
    <property type="gene ID" value="ENSCAFG00845027108.1"/>
</dbReference>
<dbReference type="GeneID" id="404020"/>
<dbReference type="VEuPathDB" id="HostDB:ENSCAFG00845027108"/>
<dbReference type="VGNC" id="VGNC:38263">
    <property type="gene designation" value="ATP4B"/>
</dbReference>
<dbReference type="eggNOG" id="KOG3927">
    <property type="taxonomic scope" value="Eukaryota"/>
</dbReference>
<dbReference type="GeneTree" id="ENSGT01030000234579"/>
<dbReference type="InParanoid" id="P33704"/>
<dbReference type="OrthoDB" id="5912413at2759"/>
<dbReference type="Reactome" id="R-CFA-936837">
    <property type="pathway name" value="Ion transport by P-type ATPases"/>
</dbReference>
<dbReference type="Proteomes" id="UP000002254">
    <property type="component" value="Chromosome 22"/>
</dbReference>
<dbReference type="Proteomes" id="UP000694429">
    <property type="component" value="Chromosome 22"/>
</dbReference>
<dbReference type="Proteomes" id="UP000694542">
    <property type="component" value="Chromosome 22"/>
</dbReference>
<dbReference type="Proteomes" id="UP000805418">
    <property type="component" value="Chromosome 22"/>
</dbReference>
<dbReference type="Bgee" id="ENSCAFG00000006390">
    <property type="expression patterns" value="Expressed in stomach and 4 other cell types or tissues"/>
</dbReference>
<dbReference type="GO" id="GO:0016324">
    <property type="term" value="C:apical plasma membrane"/>
    <property type="evidence" value="ECO:0007669"/>
    <property type="project" value="UniProtKB-SubCell"/>
</dbReference>
<dbReference type="GO" id="GO:0005890">
    <property type="term" value="C:sodium:potassium-exchanging ATPase complex"/>
    <property type="evidence" value="ECO:0000318"/>
    <property type="project" value="GO_Central"/>
</dbReference>
<dbReference type="GO" id="GO:0001671">
    <property type="term" value="F:ATPase activator activity"/>
    <property type="evidence" value="ECO:0000318"/>
    <property type="project" value="GO_Central"/>
</dbReference>
<dbReference type="GO" id="GO:0007155">
    <property type="term" value="P:cell adhesion"/>
    <property type="evidence" value="ECO:0007669"/>
    <property type="project" value="UniProtKB-KW"/>
</dbReference>
<dbReference type="GO" id="GO:0030007">
    <property type="term" value="P:intracellular potassium ion homeostasis"/>
    <property type="evidence" value="ECO:0000318"/>
    <property type="project" value="GO_Central"/>
</dbReference>
<dbReference type="GO" id="GO:0006883">
    <property type="term" value="P:intracellular sodium ion homeostasis"/>
    <property type="evidence" value="ECO:0000318"/>
    <property type="project" value="GO_Central"/>
</dbReference>
<dbReference type="GO" id="GO:1990573">
    <property type="term" value="P:potassium ion import across plasma membrane"/>
    <property type="evidence" value="ECO:0000318"/>
    <property type="project" value="GO_Central"/>
</dbReference>
<dbReference type="GO" id="GO:1902600">
    <property type="term" value="P:proton transmembrane transport"/>
    <property type="evidence" value="ECO:0007669"/>
    <property type="project" value="UniProtKB-KW"/>
</dbReference>
<dbReference type="GO" id="GO:0036376">
    <property type="term" value="P:sodium ion export across plasma membrane"/>
    <property type="evidence" value="ECO:0000318"/>
    <property type="project" value="GO_Central"/>
</dbReference>
<dbReference type="FunFam" id="1.20.5.170:FF:000061">
    <property type="entry name" value="Sodium/potassium-transporting ATPase subunit beta"/>
    <property type="match status" value="1"/>
</dbReference>
<dbReference type="FunFam" id="2.60.40.1660:FF:000006">
    <property type="entry name" value="Sodium/potassium-transporting ATPase subunit beta"/>
    <property type="match status" value="1"/>
</dbReference>
<dbReference type="Gene3D" id="1.20.5.170">
    <property type="match status" value="1"/>
</dbReference>
<dbReference type="Gene3D" id="2.60.40.1660">
    <property type="entry name" value="Na, k-atpase alpha subunit"/>
    <property type="match status" value="1"/>
</dbReference>
<dbReference type="InterPro" id="IPR000402">
    <property type="entry name" value="Na/K_ATPase_sub_beta"/>
</dbReference>
<dbReference type="InterPro" id="IPR038702">
    <property type="entry name" value="Na/K_ATPase_sub_beta_sf"/>
</dbReference>
<dbReference type="NCBIfam" id="TIGR01107">
    <property type="entry name" value="Na_K_ATPase_bet"/>
    <property type="match status" value="1"/>
</dbReference>
<dbReference type="PANTHER" id="PTHR11523:SF11">
    <property type="entry name" value="POTASSIUM-TRANSPORTING ATPASE SUBUNIT BETA"/>
    <property type="match status" value="1"/>
</dbReference>
<dbReference type="PANTHER" id="PTHR11523">
    <property type="entry name" value="SODIUM/POTASSIUM-DEPENDENT ATPASE BETA SUBUNIT"/>
    <property type="match status" value="1"/>
</dbReference>
<dbReference type="Pfam" id="PF00287">
    <property type="entry name" value="Na_K-ATPase"/>
    <property type="match status" value="1"/>
</dbReference>
<dbReference type="PROSITE" id="PS00390">
    <property type="entry name" value="ATPASE_NA_K_BETA_1"/>
    <property type="match status" value="1"/>
</dbReference>
<dbReference type="PROSITE" id="PS00391">
    <property type="entry name" value="ATPASE_NA_K_BETA_2"/>
    <property type="match status" value="1"/>
</dbReference>
<reference key="1">
    <citation type="journal article" date="1993" name="Biochem. Biophys. Res. Commun.">
        <title>Molecular cloning and structural analysis of canine gastric H+,K(+)-ATPase.</title>
        <authorList>
            <person name="Song I."/>
            <person name="Mortell M.P."/>
            <person name="Gantz I."/>
            <person name="Brown D.R."/>
            <person name="Yamada T."/>
        </authorList>
    </citation>
    <scope>NUCLEOTIDE SEQUENCE [MRNA]</scope>
    <source>
        <tissue>Stomach</tissue>
    </source>
</reference>
<gene>
    <name type="primary">ATP4B</name>
</gene>
<accession>P33704</accession>
<feature type="chain" id="PRO_0000219090" description="Potassium-transporting ATPase subunit beta">
    <location>
        <begin position="1"/>
        <end position="290"/>
    </location>
</feature>
<feature type="topological domain" description="Cytoplasmic" evidence="7">
    <location>
        <begin position="1"/>
        <end position="36"/>
    </location>
</feature>
<feature type="transmembrane region" description="Helical; Signal-anchor for type II membrane protein" evidence="7">
    <location>
        <begin position="37"/>
        <end position="57"/>
    </location>
</feature>
<feature type="topological domain" description="Extracellular" evidence="7">
    <location>
        <begin position="58"/>
        <end position="290"/>
    </location>
</feature>
<feature type="region of interest" description="immunoglobulin-like" evidence="1">
    <location>
        <begin position="194"/>
        <end position="290"/>
    </location>
</feature>
<feature type="glycosylation site" description="N-linked (GlcNAc...) asparagine" evidence="3">
    <location>
        <position position="99"/>
    </location>
</feature>
<feature type="glycosylation site" description="N-linked (GlcNAc...) asparagine" evidence="3">
    <location>
        <position position="103"/>
    </location>
</feature>
<feature type="glycosylation site" description="N-linked (GlcNAc...) asparagine" evidence="3">
    <location>
        <position position="130"/>
    </location>
</feature>
<feature type="glycosylation site" description="N-linked (GlcNAc...) asparagine" evidence="3">
    <location>
        <position position="146"/>
    </location>
</feature>
<feature type="glycosylation site" description="N-linked (GlcNAc...) asparagine" evidence="3">
    <location>
        <position position="161"/>
    </location>
</feature>
<feature type="glycosylation site" description="N-linked (GlcNAc...) asparagine" evidence="3">
    <location>
        <position position="193"/>
    </location>
</feature>
<feature type="glycosylation site" description="N-linked (GlcNAc...) asparagine" evidence="3">
    <location>
        <position position="221"/>
    </location>
</feature>
<feature type="disulfide bond" evidence="2">
    <location>
        <begin position="131"/>
        <end position="152"/>
    </location>
</feature>
<feature type="disulfide bond" evidence="2">
    <location>
        <begin position="162"/>
        <end position="178"/>
    </location>
</feature>
<feature type="disulfide bond" evidence="2">
    <location>
        <begin position="201"/>
        <end position="262"/>
    </location>
</feature>
<keyword id="KW-0130">Cell adhesion</keyword>
<keyword id="KW-1003">Cell membrane</keyword>
<keyword id="KW-1015">Disulfide bond</keyword>
<keyword id="KW-0325">Glycoprotein</keyword>
<keyword id="KW-0375">Hydrogen ion transport</keyword>
<keyword id="KW-0406">Ion transport</keyword>
<keyword id="KW-0472">Membrane</keyword>
<keyword id="KW-0630">Potassium</keyword>
<keyword id="KW-0633">Potassium transport</keyword>
<keyword id="KW-1185">Reference proteome</keyword>
<keyword id="KW-0735">Signal-anchor</keyword>
<keyword id="KW-0812">Transmembrane</keyword>
<keyword id="KW-1133">Transmembrane helix</keyword>
<keyword id="KW-0813">Transport</keyword>
<name>ATP4B_CANLF</name>
<evidence type="ECO:0000250" key="1"/>
<evidence type="ECO:0000250" key="2">
    <source>
        <dbReference type="UniProtKB" id="P18434"/>
    </source>
</evidence>
<evidence type="ECO:0000250" key="3">
    <source>
        <dbReference type="UniProtKB" id="P18597"/>
    </source>
</evidence>
<evidence type="ECO:0000250" key="4">
    <source>
        <dbReference type="UniProtKB" id="P19156"/>
    </source>
</evidence>
<evidence type="ECO:0000250" key="5">
    <source>
        <dbReference type="UniProtKB" id="P20648"/>
    </source>
</evidence>
<evidence type="ECO:0000250" key="6">
    <source>
        <dbReference type="UniProtKB" id="P51164"/>
    </source>
</evidence>
<evidence type="ECO:0000255" key="7"/>
<evidence type="ECO:0000305" key="8"/>
<proteinExistence type="evidence at transcript level"/>
<sequence>MAALQEKKSCSQRMEEFQRYCWNPDTGQMLGRTLSRWVWISLYYVAFYVVMTGIFALCIYTLMCTLDPYTPDYQDQLKSPGVTLRPDVYGEKGLDISYNVSDNRTWVDLVNILHNFLEGYSPTSQEDNINCTSEKYFFQDVFGAPNHTKFSCKFMADMLQNCSGLTDPNFGFAEGKPCFIIKMNRIVNFLPSNSTAPRADCTFLDQHKDDRPLQVEYYPPNGTFSLRYFPYYGKKAQPHYSNPLVAAKLLNVPRNTEVLIVCKILADYVTFDNPHDPYEGKVEFKLTIQQ</sequence>
<comment type="function">
    <text evidence="3 4">The beta subunit of the gastric H(+)/K(+) ATPase pump which transports H(+) ions in exchange for K(+) ions across the apical membrane of parietal cells. Plays a structural and regulatory role in the assembly and membrane targeting of a functionally active pump (By similarity). Within a transport cycle, the transfer of a H(+) ion across the membrane is coupled to ATP hydrolysis and is associated with a transient phosphorylation of the alpha subunit that shifts the pump conformation from inward-facing (E1) to outward-facing state (E2). Interacts with the phosphorylation domain of the alpha subunit and functions as a ratchet, stabilizing the lumenal-open E2 conformation and preventing the reverse reaction of the transport cycle (By similarity).</text>
</comment>
<comment type="subunit">
    <text evidence="2 3">The ATPase pump is composed of two subunits: alpha (catalytic) and beta (regulatory). Interacts with alpha subunit ATP12A; this interaction is required for the formation of a functionally active pump and targeting at the plasma membrane (By similarity). Interacts (via N-terminus) with alpha subunit ATP4A (via the P-domain) (By similarity).</text>
</comment>
<comment type="subcellular location">
    <subcellularLocation>
        <location evidence="5">Apical cell membrane</location>
        <topology evidence="7">Single-pass type II membrane protein</topology>
    </subcellularLocation>
    <subcellularLocation>
        <location evidence="3">Cell membrane</location>
        <topology evidence="7">Single-pass type II membrane protein</topology>
    </subcellularLocation>
    <text evidence="5">Localized in the apical canalicular membrane of parietal cells.</text>
</comment>
<comment type="domain">
    <text evidence="6">The C-terminal lobe folds into an immunoglobulin-like domain and mediates cell adhesion properties.</text>
</comment>
<comment type="PTM">
    <text evidence="3">N-glycosylation is necessary for assembly and functional expression of the pump at the plasma membrane.</text>
</comment>
<comment type="similarity">
    <text evidence="8">Belongs to the X(+)/potassium ATPases subunit beta family.</text>
</comment>